<accession>Q5ZYK6</accession>
<organism>
    <name type="scientific">Legionella pneumophila subsp. pneumophila (strain Philadelphia 1 / ATCC 33152 / DSM 7513)</name>
    <dbReference type="NCBI Taxonomy" id="272624"/>
    <lineage>
        <taxon>Bacteria</taxon>
        <taxon>Pseudomonadati</taxon>
        <taxon>Pseudomonadota</taxon>
        <taxon>Gammaproteobacteria</taxon>
        <taxon>Legionellales</taxon>
        <taxon>Legionellaceae</taxon>
        <taxon>Legionella</taxon>
    </lineage>
</organism>
<name>DAPF_LEGPH</name>
<sequence length="277" mass="29953">MGIKFTKMHGLGNDFIVLDGVNQSIQLTVEQIQKLANRHTGIGFDQCLLIESSQTEGIDFNYRIFNADGQEVGQCGNGARCIALFARYYGLTAKNKLTVATKTTLMDLIINEDNSVSVNMGVPRLAPGEIPLLADRQSPEYSLELNNGNTVNLHAISVGNPHAVLLVENIDTAPVNSLGQQISFHPQFPEQVNVGFMQIINHEKINLRVYERGCGETIACGSGAVAAAAIARLFYNLSDKITVHLPGGDLCIQWPCPTAPIILTGPAAFVYEGTLLS</sequence>
<protein>
    <recommendedName>
        <fullName evidence="1">Diaminopimelate epimerase</fullName>
        <shortName evidence="1">DAP epimerase</shortName>
        <ecNumber evidence="1">5.1.1.7</ecNumber>
    </recommendedName>
    <alternativeName>
        <fullName evidence="1">PLP-independent amino acid racemase</fullName>
    </alternativeName>
</protein>
<gene>
    <name evidence="1" type="primary">dapF</name>
    <name type="ordered locus">lpg0366</name>
</gene>
<keyword id="KW-0028">Amino-acid biosynthesis</keyword>
<keyword id="KW-0963">Cytoplasm</keyword>
<keyword id="KW-0413">Isomerase</keyword>
<keyword id="KW-0457">Lysine biosynthesis</keyword>
<keyword id="KW-1185">Reference proteome</keyword>
<reference key="1">
    <citation type="journal article" date="2004" name="Science">
        <title>The genomic sequence of the accidental pathogen Legionella pneumophila.</title>
        <authorList>
            <person name="Chien M."/>
            <person name="Morozova I."/>
            <person name="Shi S."/>
            <person name="Sheng H."/>
            <person name="Chen J."/>
            <person name="Gomez S.M."/>
            <person name="Asamani G."/>
            <person name="Hill K."/>
            <person name="Nuara J."/>
            <person name="Feder M."/>
            <person name="Rineer J."/>
            <person name="Greenberg J.J."/>
            <person name="Steshenko V."/>
            <person name="Park S.H."/>
            <person name="Zhao B."/>
            <person name="Teplitskaya E."/>
            <person name="Edwards J.R."/>
            <person name="Pampou S."/>
            <person name="Georghiou A."/>
            <person name="Chou I.-C."/>
            <person name="Iannuccilli W."/>
            <person name="Ulz M.E."/>
            <person name="Kim D.H."/>
            <person name="Geringer-Sameth A."/>
            <person name="Goldsberry C."/>
            <person name="Morozov P."/>
            <person name="Fischer S.G."/>
            <person name="Segal G."/>
            <person name="Qu X."/>
            <person name="Rzhetsky A."/>
            <person name="Zhang P."/>
            <person name="Cayanis E."/>
            <person name="De Jong P.J."/>
            <person name="Ju J."/>
            <person name="Kalachikov S."/>
            <person name="Shuman H.A."/>
            <person name="Russo J.J."/>
        </authorList>
    </citation>
    <scope>NUCLEOTIDE SEQUENCE [LARGE SCALE GENOMIC DNA]</scope>
    <source>
        <strain>Philadelphia 1 / ATCC 33152 / DSM 7513</strain>
    </source>
</reference>
<feature type="chain" id="PRO_1000011895" description="Diaminopimelate epimerase">
    <location>
        <begin position="1"/>
        <end position="277"/>
    </location>
</feature>
<feature type="active site" description="Proton donor" evidence="1">
    <location>
        <position position="75"/>
    </location>
</feature>
<feature type="active site" description="Proton acceptor" evidence="1">
    <location>
        <position position="220"/>
    </location>
</feature>
<feature type="binding site" evidence="1">
    <location>
        <position position="13"/>
    </location>
    <ligand>
        <name>substrate</name>
    </ligand>
</feature>
<feature type="binding site" evidence="1">
    <location>
        <position position="46"/>
    </location>
    <ligand>
        <name>substrate</name>
    </ligand>
</feature>
<feature type="binding site" evidence="1">
    <location>
        <position position="66"/>
    </location>
    <ligand>
        <name>substrate</name>
    </ligand>
</feature>
<feature type="binding site" evidence="1">
    <location>
        <begin position="76"/>
        <end position="77"/>
    </location>
    <ligand>
        <name>substrate</name>
    </ligand>
</feature>
<feature type="binding site" evidence="1">
    <location>
        <position position="160"/>
    </location>
    <ligand>
        <name>substrate</name>
    </ligand>
</feature>
<feature type="binding site" evidence="1">
    <location>
        <position position="193"/>
    </location>
    <ligand>
        <name>substrate</name>
    </ligand>
</feature>
<feature type="binding site" evidence="1">
    <location>
        <begin position="211"/>
        <end position="212"/>
    </location>
    <ligand>
        <name>substrate</name>
    </ligand>
</feature>
<feature type="binding site" evidence="1">
    <location>
        <begin position="221"/>
        <end position="222"/>
    </location>
    <ligand>
        <name>substrate</name>
    </ligand>
</feature>
<feature type="site" description="Could be important to modulate the pK values of the two catalytic cysteine residues" evidence="1">
    <location>
        <position position="162"/>
    </location>
</feature>
<feature type="site" description="Could be important to modulate the pK values of the two catalytic cysteine residues" evidence="1">
    <location>
        <position position="211"/>
    </location>
</feature>
<feature type="site" description="Important for dimerization" evidence="1">
    <location>
        <position position="271"/>
    </location>
</feature>
<comment type="function">
    <text evidence="1">Catalyzes the stereoinversion of LL-2,6-diaminopimelate (L,L-DAP) to meso-diaminopimelate (meso-DAP), a precursor of L-lysine and an essential component of the bacterial peptidoglycan.</text>
</comment>
<comment type="catalytic activity">
    <reaction evidence="1">
        <text>(2S,6S)-2,6-diaminopimelate = meso-2,6-diaminopimelate</text>
        <dbReference type="Rhea" id="RHEA:15393"/>
        <dbReference type="ChEBI" id="CHEBI:57609"/>
        <dbReference type="ChEBI" id="CHEBI:57791"/>
        <dbReference type="EC" id="5.1.1.7"/>
    </reaction>
</comment>
<comment type="pathway">
    <text evidence="1">Amino-acid biosynthesis; L-lysine biosynthesis via DAP pathway; DL-2,6-diaminopimelate from LL-2,6-diaminopimelate: step 1/1.</text>
</comment>
<comment type="subunit">
    <text evidence="1">Homodimer.</text>
</comment>
<comment type="subcellular location">
    <subcellularLocation>
        <location evidence="1">Cytoplasm</location>
    </subcellularLocation>
</comment>
<comment type="similarity">
    <text evidence="1">Belongs to the diaminopimelate epimerase family.</text>
</comment>
<proteinExistence type="inferred from homology"/>
<evidence type="ECO:0000255" key="1">
    <source>
        <dbReference type="HAMAP-Rule" id="MF_00197"/>
    </source>
</evidence>
<dbReference type="EC" id="5.1.1.7" evidence="1"/>
<dbReference type="EMBL" id="AE017354">
    <property type="protein sequence ID" value="AAU26463.1"/>
    <property type="molecule type" value="Genomic_DNA"/>
</dbReference>
<dbReference type="RefSeq" id="WP_010946115.1">
    <property type="nucleotide sequence ID" value="NC_002942.5"/>
</dbReference>
<dbReference type="RefSeq" id="YP_094410.1">
    <property type="nucleotide sequence ID" value="NC_002942.5"/>
</dbReference>
<dbReference type="SMR" id="Q5ZYK6"/>
<dbReference type="STRING" id="272624.lpg0366"/>
<dbReference type="PaxDb" id="272624-lpg0366"/>
<dbReference type="GeneID" id="57034369"/>
<dbReference type="KEGG" id="lpn:lpg0366"/>
<dbReference type="PATRIC" id="fig|272624.6.peg.373"/>
<dbReference type="eggNOG" id="COG0253">
    <property type="taxonomic scope" value="Bacteria"/>
</dbReference>
<dbReference type="HOGENOM" id="CLU_053306_1_1_6"/>
<dbReference type="OrthoDB" id="9805408at2"/>
<dbReference type="UniPathway" id="UPA00034">
    <property type="reaction ID" value="UER00025"/>
</dbReference>
<dbReference type="Proteomes" id="UP000000609">
    <property type="component" value="Chromosome"/>
</dbReference>
<dbReference type="GO" id="GO:0005829">
    <property type="term" value="C:cytosol"/>
    <property type="evidence" value="ECO:0007669"/>
    <property type="project" value="TreeGrafter"/>
</dbReference>
<dbReference type="GO" id="GO:0008837">
    <property type="term" value="F:diaminopimelate epimerase activity"/>
    <property type="evidence" value="ECO:0007669"/>
    <property type="project" value="UniProtKB-UniRule"/>
</dbReference>
<dbReference type="GO" id="GO:0009089">
    <property type="term" value="P:lysine biosynthetic process via diaminopimelate"/>
    <property type="evidence" value="ECO:0007669"/>
    <property type="project" value="UniProtKB-UniRule"/>
</dbReference>
<dbReference type="FunFam" id="3.10.310.10:FF:000001">
    <property type="entry name" value="Diaminopimelate epimerase"/>
    <property type="match status" value="1"/>
</dbReference>
<dbReference type="Gene3D" id="3.10.310.10">
    <property type="entry name" value="Diaminopimelate Epimerase, Chain A, domain 1"/>
    <property type="match status" value="2"/>
</dbReference>
<dbReference type="HAMAP" id="MF_00197">
    <property type="entry name" value="DAP_epimerase"/>
    <property type="match status" value="1"/>
</dbReference>
<dbReference type="InterPro" id="IPR001653">
    <property type="entry name" value="DAP_epimerase_DapF"/>
</dbReference>
<dbReference type="NCBIfam" id="TIGR00652">
    <property type="entry name" value="DapF"/>
    <property type="match status" value="1"/>
</dbReference>
<dbReference type="PANTHER" id="PTHR31689:SF0">
    <property type="entry name" value="DIAMINOPIMELATE EPIMERASE"/>
    <property type="match status" value="1"/>
</dbReference>
<dbReference type="PANTHER" id="PTHR31689">
    <property type="entry name" value="DIAMINOPIMELATE EPIMERASE, CHLOROPLASTIC"/>
    <property type="match status" value="1"/>
</dbReference>
<dbReference type="Pfam" id="PF01678">
    <property type="entry name" value="DAP_epimerase"/>
    <property type="match status" value="2"/>
</dbReference>
<dbReference type="SUPFAM" id="SSF54506">
    <property type="entry name" value="Diaminopimelate epimerase-like"/>
    <property type="match status" value="2"/>
</dbReference>